<keyword id="KW-0106">Calcium</keyword>
<keyword id="KW-1015">Disulfide bond</keyword>
<keyword id="KW-0325">Glycoprotein</keyword>
<keyword id="KW-0349">Heme</keyword>
<keyword id="KW-0376">Hydrogen peroxide</keyword>
<keyword id="KW-0408">Iron</keyword>
<keyword id="KW-0479">Metal-binding</keyword>
<keyword id="KW-0560">Oxidoreductase</keyword>
<keyword id="KW-0575">Peroxidase</keyword>
<keyword id="KW-0873">Pyrrolidone carboxylic acid</keyword>
<keyword id="KW-1185">Reference proteome</keyword>
<keyword id="KW-0964">Secreted</keyword>
<keyword id="KW-0732">Signal</keyword>
<keyword id="KW-0926">Vacuole</keyword>
<accession>O80912</accession>
<organism>
    <name type="scientific">Arabidopsis thaliana</name>
    <name type="common">Mouse-ear cress</name>
    <dbReference type="NCBI Taxonomy" id="3702"/>
    <lineage>
        <taxon>Eukaryota</taxon>
        <taxon>Viridiplantae</taxon>
        <taxon>Streptophyta</taxon>
        <taxon>Embryophyta</taxon>
        <taxon>Tracheophyta</taxon>
        <taxon>Spermatophyta</taxon>
        <taxon>Magnoliopsida</taxon>
        <taxon>eudicotyledons</taxon>
        <taxon>Gunneridae</taxon>
        <taxon>Pentapetalae</taxon>
        <taxon>rosids</taxon>
        <taxon>malvids</taxon>
        <taxon>Brassicales</taxon>
        <taxon>Brassicaceae</taxon>
        <taxon>Camelineae</taxon>
        <taxon>Arabidopsis</taxon>
    </lineage>
</organism>
<evidence type="ECO:0000250" key="1">
    <source>
        <dbReference type="UniProtKB" id="Q42578"/>
    </source>
</evidence>
<evidence type="ECO:0000255" key="2"/>
<evidence type="ECO:0000255" key="3">
    <source>
        <dbReference type="PROSITE-ProRule" id="PRU00297"/>
    </source>
</evidence>
<evidence type="ECO:0000255" key="4">
    <source>
        <dbReference type="PROSITE-ProRule" id="PRU10012"/>
    </source>
</evidence>
<evidence type="ECO:0000269" key="5">
    <source>
    </source>
</evidence>
<evidence type="ECO:0000305" key="6"/>
<name>PER23_ARATH</name>
<feature type="signal peptide" evidence="2">
    <location>
        <begin position="1"/>
        <end position="29"/>
    </location>
</feature>
<feature type="chain" id="PRO_0000023689" description="Peroxidase 23">
    <location>
        <begin position="30"/>
        <end position="349"/>
    </location>
</feature>
<feature type="active site" description="Proton acceptor" evidence="3 4">
    <location>
        <position position="71"/>
    </location>
</feature>
<feature type="binding site" evidence="3">
    <location>
        <position position="72"/>
    </location>
    <ligand>
        <name>Ca(2+)</name>
        <dbReference type="ChEBI" id="CHEBI:29108"/>
        <label>1</label>
    </ligand>
</feature>
<feature type="binding site" evidence="3">
    <location>
        <position position="75"/>
    </location>
    <ligand>
        <name>Ca(2+)</name>
        <dbReference type="ChEBI" id="CHEBI:29108"/>
        <label>1</label>
    </ligand>
</feature>
<feature type="binding site" evidence="3">
    <location>
        <position position="77"/>
    </location>
    <ligand>
        <name>Ca(2+)</name>
        <dbReference type="ChEBI" id="CHEBI:29108"/>
        <label>1</label>
    </ligand>
</feature>
<feature type="binding site" evidence="3">
    <location>
        <position position="79"/>
    </location>
    <ligand>
        <name>Ca(2+)</name>
        <dbReference type="ChEBI" id="CHEBI:29108"/>
        <label>1</label>
    </ligand>
</feature>
<feature type="binding site" evidence="3">
    <location>
        <position position="81"/>
    </location>
    <ligand>
        <name>Ca(2+)</name>
        <dbReference type="ChEBI" id="CHEBI:29108"/>
        <label>1</label>
    </ligand>
</feature>
<feature type="binding site" evidence="3">
    <location>
        <position position="168"/>
    </location>
    <ligand>
        <name>substrate</name>
    </ligand>
</feature>
<feature type="binding site" description="axial binding residue" evidence="3">
    <location>
        <position position="199"/>
    </location>
    <ligand>
        <name>heme b</name>
        <dbReference type="ChEBI" id="CHEBI:60344"/>
    </ligand>
    <ligandPart>
        <name>Fe</name>
        <dbReference type="ChEBI" id="CHEBI:18248"/>
    </ligandPart>
</feature>
<feature type="binding site" evidence="3">
    <location>
        <position position="200"/>
    </location>
    <ligand>
        <name>Ca(2+)</name>
        <dbReference type="ChEBI" id="CHEBI:29108"/>
        <label>2</label>
    </ligand>
</feature>
<feature type="binding site" evidence="3">
    <location>
        <position position="251"/>
    </location>
    <ligand>
        <name>Ca(2+)</name>
        <dbReference type="ChEBI" id="CHEBI:29108"/>
        <label>2</label>
    </ligand>
</feature>
<feature type="binding site" evidence="3">
    <location>
        <position position="254"/>
    </location>
    <ligand>
        <name>Ca(2+)</name>
        <dbReference type="ChEBI" id="CHEBI:29108"/>
        <label>2</label>
    </ligand>
</feature>
<feature type="binding site" evidence="3">
    <location>
        <position position="259"/>
    </location>
    <ligand>
        <name>Ca(2+)</name>
        <dbReference type="ChEBI" id="CHEBI:29108"/>
        <label>2</label>
    </ligand>
</feature>
<feature type="site" description="Transition state stabilizer" evidence="3">
    <location>
        <position position="67"/>
    </location>
</feature>
<feature type="modified residue" description="Pyrrolidone carboxylic acid" evidence="1 3">
    <location>
        <position position="30"/>
    </location>
</feature>
<feature type="glycosylation site" description="N-linked (GlcNAc...) asparagine" evidence="2">
    <location>
        <position position="86"/>
    </location>
</feature>
<feature type="glycosylation site" description="N-linked (GlcNAc...) asparagine" evidence="2">
    <location>
        <position position="217"/>
    </location>
</feature>
<feature type="glycosylation site" description="N-linked (GlcNAc...) asparagine" evidence="2">
    <location>
        <position position="243"/>
    </location>
</feature>
<feature type="disulfide bond" evidence="3">
    <location>
        <begin position="40"/>
        <end position="120"/>
    </location>
</feature>
<feature type="disulfide bond" evidence="3">
    <location>
        <begin position="73"/>
        <end position="78"/>
    </location>
</feature>
<feature type="disulfide bond" evidence="3">
    <location>
        <begin position="126"/>
        <end position="329"/>
    </location>
</feature>
<feature type="disulfide bond" evidence="3">
    <location>
        <begin position="206"/>
        <end position="238"/>
    </location>
</feature>
<reference key="1">
    <citation type="journal article" date="2002" name="Eur. J. Biochem.">
        <title>Structural diversity and transcription of class III peroxidases from Arabidopsis thaliana.</title>
        <authorList>
            <person name="Welinder K.G."/>
            <person name="Justesen A.F."/>
            <person name="Kjaersgaard I.V.H."/>
            <person name="Jensen R.B."/>
            <person name="Rasmussen S.K."/>
            <person name="Jespersen H.M."/>
            <person name="Duroux L."/>
        </authorList>
    </citation>
    <scope>NUCLEOTIDE SEQUENCE [MRNA]</scope>
    <source>
        <strain>cv. Columbia</strain>
        <tissue>Root</tissue>
    </source>
</reference>
<reference key="2">
    <citation type="journal article" date="1999" name="Nature">
        <title>Sequence and analysis of chromosome 2 of the plant Arabidopsis thaliana.</title>
        <authorList>
            <person name="Lin X."/>
            <person name="Kaul S."/>
            <person name="Rounsley S.D."/>
            <person name="Shea T.P."/>
            <person name="Benito M.-I."/>
            <person name="Town C.D."/>
            <person name="Fujii C.Y."/>
            <person name="Mason T.M."/>
            <person name="Bowman C.L."/>
            <person name="Barnstead M.E."/>
            <person name="Feldblyum T.V."/>
            <person name="Buell C.R."/>
            <person name="Ketchum K.A."/>
            <person name="Lee J.J."/>
            <person name="Ronning C.M."/>
            <person name="Koo H.L."/>
            <person name="Moffat K.S."/>
            <person name="Cronin L.A."/>
            <person name="Shen M."/>
            <person name="Pai G."/>
            <person name="Van Aken S."/>
            <person name="Umayam L."/>
            <person name="Tallon L.J."/>
            <person name="Gill J.E."/>
            <person name="Adams M.D."/>
            <person name="Carrera A.J."/>
            <person name="Creasy T.H."/>
            <person name="Goodman H.M."/>
            <person name="Somerville C.R."/>
            <person name="Copenhaver G.P."/>
            <person name="Preuss D."/>
            <person name="Nierman W.C."/>
            <person name="White O."/>
            <person name="Eisen J.A."/>
            <person name="Salzberg S.L."/>
            <person name="Fraser C.M."/>
            <person name="Venter J.C."/>
        </authorList>
    </citation>
    <scope>NUCLEOTIDE SEQUENCE [LARGE SCALE GENOMIC DNA]</scope>
    <source>
        <strain>cv. Columbia</strain>
    </source>
</reference>
<reference key="3">
    <citation type="journal article" date="2017" name="Plant J.">
        <title>Araport11: a complete reannotation of the Arabidopsis thaliana reference genome.</title>
        <authorList>
            <person name="Cheng C.Y."/>
            <person name="Krishnakumar V."/>
            <person name="Chan A.P."/>
            <person name="Thibaud-Nissen F."/>
            <person name="Schobel S."/>
            <person name="Town C.D."/>
        </authorList>
    </citation>
    <scope>GENOME REANNOTATION</scope>
    <source>
        <strain>cv. Columbia</strain>
    </source>
</reference>
<reference key="4">
    <citation type="journal article" date="2003" name="Science">
        <title>Empirical analysis of transcriptional activity in the Arabidopsis genome.</title>
        <authorList>
            <person name="Yamada K."/>
            <person name="Lim J."/>
            <person name="Dale J.M."/>
            <person name="Chen H."/>
            <person name="Shinn P."/>
            <person name="Palm C.J."/>
            <person name="Southwick A.M."/>
            <person name="Wu H.C."/>
            <person name="Kim C.J."/>
            <person name="Nguyen M."/>
            <person name="Pham P.K."/>
            <person name="Cheuk R.F."/>
            <person name="Karlin-Newmann G."/>
            <person name="Liu S.X."/>
            <person name="Lam B."/>
            <person name="Sakano H."/>
            <person name="Wu T."/>
            <person name="Yu G."/>
            <person name="Miranda M."/>
            <person name="Quach H.L."/>
            <person name="Tripp M."/>
            <person name="Chang C.H."/>
            <person name="Lee J.M."/>
            <person name="Toriumi M.J."/>
            <person name="Chan M.M."/>
            <person name="Tang C.C."/>
            <person name="Onodera C.S."/>
            <person name="Deng J.M."/>
            <person name="Akiyama K."/>
            <person name="Ansari Y."/>
            <person name="Arakawa T."/>
            <person name="Banh J."/>
            <person name="Banno F."/>
            <person name="Bowser L."/>
            <person name="Brooks S.Y."/>
            <person name="Carninci P."/>
            <person name="Chao Q."/>
            <person name="Choy N."/>
            <person name="Enju A."/>
            <person name="Goldsmith A.D."/>
            <person name="Gurjal M."/>
            <person name="Hansen N.F."/>
            <person name="Hayashizaki Y."/>
            <person name="Johnson-Hopson C."/>
            <person name="Hsuan V.W."/>
            <person name="Iida K."/>
            <person name="Karnes M."/>
            <person name="Khan S."/>
            <person name="Koesema E."/>
            <person name="Ishida J."/>
            <person name="Jiang P.X."/>
            <person name="Jones T."/>
            <person name="Kawai J."/>
            <person name="Kamiya A."/>
            <person name="Meyers C."/>
            <person name="Nakajima M."/>
            <person name="Narusaka M."/>
            <person name="Seki M."/>
            <person name="Sakurai T."/>
            <person name="Satou M."/>
            <person name="Tamse R."/>
            <person name="Vaysberg M."/>
            <person name="Wallender E.K."/>
            <person name="Wong C."/>
            <person name="Yamamura Y."/>
            <person name="Yuan S."/>
            <person name="Shinozaki K."/>
            <person name="Davis R.W."/>
            <person name="Theologis A."/>
            <person name="Ecker J.R."/>
        </authorList>
    </citation>
    <scope>NUCLEOTIDE SEQUENCE [LARGE SCALE MRNA]</scope>
    <source>
        <strain>cv. Columbia</strain>
    </source>
</reference>
<reference key="5">
    <citation type="journal article" date="2000" name="Proc. Natl. Acad. Sci. U.S.A.">
        <title>Coordinated plant defense responses in Arabidopsis revealed by microarray analysis.</title>
        <authorList>
            <person name="Schenk P.M."/>
            <person name="Kazan K."/>
            <person name="Wilson I."/>
            <person name="Anderson J.P."/>
            <person name="Richmond T."/>
            <person name="Somerville S.C."/>
            <person name="Manners J.M."/>
        </authorList>
    </citation>
    <scope>INDUCTION</scope>
    <source>
        <strain>cv. Columbia</strain>
    </source>
</reference>
<reference key="6">
    <citation type="journal article" date="2002" name="Gene">
        <title>Analysis and expression of the class III peroxidase large gene family in Arabidopsis thaliana.</title>
        <authorList>
            <person name="Tognolli M."/>
            <person name="Penel C."/>
            <person name="Greppin H."/>
            <person name="Simon P."/>
        </authorList>
    </citation>
    <scope>GENE FAMILY ORGANIZATION</scope>
    <scope>NOMENCLATURE</scope>
    <source>
        <strain>cv. Columbia</strain>
    </source>
</reference>
<comment type="function">
    <text>Removal of H(2)O(2), oxidation of toxic reductants, biosynthesis and degradation of lignin, suberization, auxin catabolism, response to environmental stresses such as wounding, pathogen attack and oxidative stress. These functions might be dependent on each isozyme/isoform in each plant tissue.</text>
</comment>
<comment type="catalytic activity">
    <reaction>
        <text>2 a phenolic donor + H2O2 = 2 a phenolic radical donor + 2 H2O</text>
        <dbReference type="Rhea" id="RHEA:56136"/>
        <dbReference type="ChEBI" id="CHEBI:15377"/>
        <dbReference type="ChEBI" id="CHEBI:16240"/>
        <dbReference type="ChEBI" id="CHEBI:139520"/>
        <dbReference type="ChEBI" id="CHEBI:139521"/>
        <dbReference type="EC" id="1.11.1.7"/>
    </reaction>
</comment>
<comment type="cofactor">
    <cofactor evidence="3">
        <name>heme b</name>
        <dbReference type="ChEBI" id="CHEBI:60344"/>
    </cofactor>
    <text evidence="3">Binds 1 heme b (iron(II)-protoporphyrin IX) group per subunit.</text>
</comment>
<comment type="cofactor">
    <cofactor evidence="3">
        <name>Ca(2+)</name>
        <dbReference type="ChEBI" id="CHEBI:29108"/>
    </cofactor>
    <text evidence="3">Binds 2 calcium ions per subunit.</text>
</comment>
<comment type="subcellular location">
    <subcellularLocation>
        <location evidence="6">Secreted</location>
    </subcellularLocation>
    <subcellularLocation>
        <location evidence="6">Vacuole</location>
    </subcellularLocation>
    <text>Carboxy-terminal extension appears to target the protein to vacuoles.</text>
</comment>
<comment type="induction">
    <text evidence="5">By methyl jasmonate, a plant defense-related signaling molecule.</text>
</comment>
<comment type="miscellaneous">
    <text>There are 73 peroxidase genes in A.thaliana.</text>
</comment>
<comment type="similarity">
    <text evidence="3">Belongs to the peroxidase family. Classical plant (class III) peroxidase subfamily.</text>
</comment>
<sequence>MGFSSSLSCSAMGALIVGCLLLQASNSNAQLRPDFYFRTCPPIFNIIGDTIVNELRTDPRIAASLLRLHFHDCFVRGCDASILLDNSTSFRTEKDAAPNKNSVRGFDVIDRMKAAIERACPRTVSCADIITIASQISVLLSGGPWWPVPLGRRDSVEAFFALANTALPSPFSTLTQLKTAFADVGLNRPSDLVALSGGHTFGKAQCQFVTPRLYNFNGTNRPDPSLNPTYLVELRRLCPQNGNGTVLVNFDSVTPTTFDRQYYTNLLNGKGLIQSDQVLFSTPGADTIPLVNQYSSNTFVFFGAFVDAMIRMGNLKPLTGTQGEIRQNCRVVNPRIRVVENDDGVVSSI</sequence>
<gene>
    <name type="primary">PER23</name>
    <name type="synonym">P23</name>
    <name type="ordered locus">At2g38390</name>
    <name type="ORF">T19C21.12</name>
</gene>
<protein>
    <recommendedName>
        <fullName>Peroxidase 23</fullName>
        <shortName>Atperox P23</shortName>
        <ecNumber>1.11.1.7</ecNumber>
    </recommendedName>
    <alternativeName>
        <fullName>ATP34</fullName>
    </alternativeName>
</protein>
<proteinExistence type="evidence at transcript level"/>
<dbReference type="EC" id="1.11.1.7"/>
<dbReference type="EMBL" id="AF452385">
    <property type="protein sequence ID" value="AAL40849.1"/>
    <property type="molecule type" value="mRNA"/>
</dbReference>
<dbReference type="EMBL" id="AC004683">
    <property type="protein sequence ID" value="AAC28765.1"/>
    <property type="molecule type" value="Genomic_DNA"/>
</dbReference>
<dbReference type="EMBL" id="CP002685">
    <property type="protein sequence ID" value="AEC09531.1"/>
    <property type="molecule type" value="Genomic_DNA"/>
</dbReference>
<dbReference type="EMBL" id="AY099555">
    <property type="protein sequence ID" value="AAM20407.1"/>
    <property type="molecule type" value="mRNA"/>
</dbReference>
<dbReference type="EMBL" id="BT001238">
    <property type="protein sequence ID" value="AAN65125.1"/>
    <property type="molecule type" value="mRNA"/>
</dbReference>
<dbReference type="PIR" id="T02506">
    <property type="entry name" value="T02506"/>
</dbReference>
<dbReference type="RefSeq" id="NP_181373.1">
    <property type="nucleotide sequence ID" value="NM_129395.3"/>
</dbReference>
<dbReference type="SMR" id="O80912"/>
<dbReference type="FunCoup" id="O80912">
    <property type="interactions" value="193"/>
</dbReference>
<dbReference type="IntAct" id="O80912">
    <property type="interactions" value="1"/>
</dbReference>
<dbReference type="STRING" id="3702.O80912"/>
<dbReference type="PeroxiBase" id="116">
    <property type="entry name" value="AtPrx23"/>
</dbReference>
<dbReference type="GlyCosmos" id="O80912">
    <property type="glycosylation" value="3 sites, No reported glycans"/>
</dbReference>
<dbReference type="GlyGen" id="O80912">
    <property type="glycosylation" value="4 sites"/>
</dbReference>
<dbReference type="PaxDb" id="3702-AT2G38390.1"/>
<dbReference type="ProteomicsDB" id="236777"/>
<dbReference type="EnsemblPlants" id="AT2G38390.1">
    <property type="protein sequence ID" value="AT2G38390.1"/>
    <property type="gene ID" value="AT2G38390"/>
</dbReference>
<dbReference type="GeneID" id="818420"/>
<dbReference type="Gramene" id="AT2G38390.1">
    <property type="protein sequence ID" value="AT2G38390.1"/>
    <property type="gene ID" value="AT2G38390"/>
</dbReference>
<dbReference type="KEGG" id="ath:AT2G38390"/>
<dbReference type="Araport" id="AT2G38390"/>
<dbReference type="TAIR" id="AT2G38390"/>
<dbReference type="eggNOG" id="ENOG502QVXS">
    <property type="taxonomic scope" value="Eukaryota"/>
</dbReference>
<dbReference type="HOGENOM" id="CLU_010543_0_1_1"/>
<dbReference type="InParanoid" id="O80912"/>
<dbReference type="OMA" id="CPPIFNI"/>
<dbReference type="PhylomeDB" id="O80912"/>
<dbReference type="BioCyc" id="ARA:AT2G38390-MONOMER"/>
<dbReference type="PRO" id="PR:O80912"/>
<dbReference type="Proteomes" id="UP000006548">
    <property type="component" value="Chromosome 2"/>
</dbReference>
<dbReference type="ExpressionAtlas" id="O80912">
    <property type="expression patterns" value="baseline and differential"/>
</dbReference>
<dbReference type="GO" id="GO:0005576">
    <property type="term" value="C:extracellular region"/>
    <property type="evidence" value="ECO:0007669"/>
    <property type="project" value="UniProtKB-SubCell"/>
</dbReference>
<dbReference type="GO" id="GO:0005773">
    <property type="term" value="C:vacuole"/>
    <property type="evidence" value="ECO:0007669"/>
    <property type="project" value="UniProtKB-SubCell"/>
</dbReference>
<dbReference type="GO" id="GO:0020037">
    <property type="term" value="F:heme binding"/>
    <property type="evidence" value="ECO:0007669"/>
    <property type="project" value="InterPro"/>
</dbReference>
<dbReference type="GO" id="GO:0140825">
    <property type="term" value="F:lactoperoxidase activity"/>
    <property type="evidence" value="ECO:0007669"/>
    <property type="project" value="UniProtKB-EC"/>
</dbReference>
<dbReference type="GO" id="GO:0046872">
    <property type="term" value="F:metal ion binding"/>
    <property type="evidence" value="ECO:0007669"/>
    <property type="project" value="UniProtKB-KW"/>
</dbReference>
<dbReference type="GO" id="GO:0042744">
    <property type="term" value="P:hydrogen peroxide catabolic process"/>
    <property type="evidence" value="ECO:0007669"/>
    <property type="project" value="UniProtKB-KW"/>
</dbReference>
<dbReference type="GO" id="GO:0006979">
    <property type="term" value="P:response to oxidative stress"/>
    <property type="evidence" value="ECO:0007669"/>
    <property type="project" value="InterPro"/>
</dbReference>
<dbReference type="CDD" id="cd00693">
    <property type="entry name" value="secretory_peroxidase"/>
    <property type="match status" value="1"/>
</dbReference>
<dbReference type="FunFam" id="1.10.420.10:FF:000001">
    <property type="entry name" value="Peroxidase"/>
    <property type="match status" value="1"/>
</dbReference>
<dbReference type="FunFam" id="1.10.520.10:FF:000009">
    <property type="entry name" value="Peroxidase"/>
    <property type="match status" value="1"/>
</dbReference>
<dbReference type="Gene3D" id="1.10.520.10">
    <property type="match status" value="1"/>
</dbReference>
<dbReference type="Gene3D" id="1.10.420.10">
    <property type="entry name" value="Peroxidase, domain 2"/>
    <property type="match status" value="1"/>
</dbReference>
<dbReference type="InterPro" id="IPR002016">
    <property type="entry name" value="Haem_peroxidase"/>
</dbReference>
<dbReference type="InterPro" id="IPR010255">
    <property type="entry name" value="Haem_peroxidase_sf"/>
</dbReference>
<dbReference type="InterPro" id="IPR000823">
    <property type="entry name" value="Peroxidase_pln"/>
</dbReference>
<dbReference type="InterPro" id="IPR019794">
    <property type="entry name" value="Peroxidases_AS"/>
</dbReference>
<dbReference type="InterPro" id="IPR019793">
    <property type="entry name" value="Peroxidases_heam-ligand_BS"/>
</dbReference>
<dbReference type="InterPro" id="IPR033905">
    <property type="entry name" value="Secretory_peroxidase"/>
</dbReference>
<dbReference type="PANTHER" id="PTHR31388:SF270">
    <property type="entry name" value="PEROXIDASE 22-RELATED"/>
    <property type="match status" value="1"/>
</dbReference>
<dbReference type="PANTHER" id="PTHR31388">
    <property type="entry name" value="PEROXIDASE 72-RELATED"/>
    <property type="match status" value="1"/>
</dbReference>
<dbReference type="Pfam" id="PF00141">
    <property type="entry name" value="peroxidase"/>
    <property type="match status" value="1"/>
</dbReference>
<dbReference type="PRINTS" id="PR00458">
    <property type="entry name" value="PEROXIDASE"/>
</dbReference>
<dbReference type="PRINTS" id="PR00461">
    <property type="entry name" value="PLPEROXIDASE"/>
</dbReference>
<dbReference type="SUPFAM" id="SSF48113">
    <property type="entry name" value="Heme-dependent peroxidases"/>
    <property type="match status" value="1"/>
</dbReference>
<dbReference type="PROSITE" id="PS00435">
    <property type="entry name" value="PEROXIDASE_1"/>
    <property type="match status" value="1"/>
</dbReference>
<dbReference type="PROSITE" id="PS00436">
    <property type="entry name" value="PEROXIDASE_2"/>
    <property type="match status" value="1"/>
</dbReference>
<dbReference type="PROSITE" id="PS50873">
    <property type="entry name" value="PEROXIDASE_4"/>
    <property type="match status" value="1"/>
</dbReference>